<name>MNTH_ECO24</name>
<gene>
    <name evidence="1" type="primary">mntH</name>
    <name type="ordered locus">EcE24377A_2682</name>
</gene>
<proteinExistence type="inferred from homology"/>
<comment type="function">
    <text evidence="1">H(+)-stimulated, divalent metal cation uptake system.</text>
</comment>
<comment type="subcellular location">
    <subcellularLocation>
        <location evidence="1">Cell inner membrane</location>
        <topology evidence="1">Multi-pass membrane protein</topology>
    </subcellularLocation>
</comment>
<comment type="similarity">
    <text evidence="1">Belongs to the NRAMP family.</text>
</comment>
<protein>
    <recommendedName>
        <fullName evidence="1">Divalent metal cation transporter MntH</fullName>
    </recommendedName>
</protein>
<reference key="1">
    <citation type="journal article" date="2008" name="J. Bacteriol.">
        <title>The pangenome structure of Escherichia coli: comparative genomic analysis of E. coli commensal and pathogenic isolates.</title>
        <authorList>
            <person name="Rasko D.A."/>
            <person name="Rosovitz M.J."/>
            <person name="Myers G.S.A."/>
            <person name="Mongodin E.F."/>
            <person name="Fricke W.F."/>
            <person name="Gajer P."/>
            <person name="Crabtree J."/>
            <person name="Sebaihia M."/>
            <person name="Thomson N.R."/>
            <person name="Chaudhuri R."/>
            <person name="Henderson I.R."/>
            <person name="Sperandio V."/>
            <person name="Ravel J."/>
        </authorList>
    </citation>
    <scope>NUCLEOTIDE SEQUENCE [LARGE SCALE GENOMIC DNA]</scope>
    <source>
        <strain>E24377A / ETEC</strain>
    </source>
</reference>
<dbReference type="EMBL" id="CP000800">
    <property type="protein sequence ID" value="ABV16871.1"/>
    <property type="molecule type" value="Genomic_DNA"/>
</dbReference>
<dbReference type="RefSeq" id="WP_000186369.1">
    <property type="nucleotide sequence ID" value="NC_009801.1"/>
</dbReference>
<dbReference type="SMR" id="A7ZPK2"/>
<dbReference type="KEGG" id="ecw:EcE24377A_2682"/>
<dbReference type="HOGENOM" id="CLU_020088_2_0_6"/>
<dbReference type="Proteomes" id="UP000001122">
    <property type="component" value="Chromosome"/>
</dbReference>
<dbReference type="GO" id="GO:0005886">
    <property type="term" value="C:plasma membrane"/>
    <property type="evidence" value="ECO:0007669"/>
    <property type="project" value="UniProtKB-SubCell"/>
</dbReference>
<dbReference type="GO" id="GO:0015086">
    <property type="term" value="F:cadmium ion transmembrane transporter activity"/>
    <property type="evidence" value="ECO:0007669"/>
    <property type="project" value="TreeGrafter"/>
</dbReference>
<dbReference type="GO" id="GO:0005384">
    <property type="term" value="F:manganese ion transmembrane transporter activity"/>
    <property type="evidence" value="ECO:0007669"/>
    <property type="project" value="TreeGrafter"/>
</dbReference>
<dbReference type="GO" id="GO:0046872">
    <property type="term" value="F:metal ion binding"/>
    <property type="evidence" value="ECO:0007669"/>
    <property type="project" value="UniProtKB-UniRule"/>
</dbReference>
<dbReference type="GO" id="GO:0015293">
    <property type="term" value="F:symporter activity"/>
    <property type="evidence" value="ECO:0007669"/>
    <property type="project" value="UniProtKB-UniRule"/>
</dbReference>
<dbReference type="GO" id="GO:0034755">
    <property type="term" value="P:iron ion transmembrane transport"/>
    <property type="evidence" value="ECO:0007669"/>
    <property type="project" value="TreeGrafter"/>
</dbReference>
<dbReference type="HAMAP" id="MF_00221">
    <property type="entry name" value="NRAMP"/>
    <property type="match status" value="1"/>
</dbReference>
<dbReference type="InterPro" id="IPR001046">
    <property type="entry name" value="NRAMP_fam"/>
</dbReference>
<dbReference type="NCBIfam" id="TIGR01197">
    <property type="entry name" value="nramp"/>
    <property type="match status" value="1"/>
</dbReference>
<dbReference type="NCBIfam" id="NF037982">
    <property type="entry name" value="Nramp_1"/>
    <property type="match status" value="1"/>
</dbReference>
<dbReference type="NCBIfam" id="NF001923">
    <property type="entry name" value="PRK00701.1"/>
    <property type="match status" value="1"/>
</dbReference>
<dbReference type="PANTHER" id="PTHR11706:SF33">
    <property type="entry name" value="NATURAL RESISTANCE-ASSOCIATED MACROPHAGE PROTEIN 2"/>
    <property type="match status" value="1"/>
</dbReference>
<dbReference type="PANTHER" id="PTHR11706">
    <property type="entry name" value="SOLUTE CARRIER PROTEIN FAMILY 11 MEMBER"/>
    <property type="match status" value="1"/>
</dbReference>
<dbReference type="Pfam" id="PF01566">
    <property type="entry name" value="Nramp"/>
    <property type="match status" value="1"/>
</dbReference>
<dbReference type="PRINTS" id="PR00447">
    <property type="entry name" value="NATRESASSCMP"/>
</dbReference>
<evidence type="ECO:0000255" key="1">
    <source>
        <dbReference type="HAMAP-Rule" id="MF_00221"/>
    </source>
</evidence>
<feature type="chain" id="PRO_1000058654" description="Divalent metal cation transporter MntH">
    <location>
        <begin position="1"/>
        <end position="412"/>
    </location>
</feature>
<feature type="topological domain" description="Cytoplasmic" evidence="1">
    <location>
        <begin position="1"/>
        <end position="19"/>
    </location>
</feature>
<feature type="transmembrane region" description="Helical" evidence="1">
    <location>
        <begin position="20"/>
        <end position="39"/>
    </location>
</feature>
<feature type="topological domain" description="Periplasmic" evidence="1">
    <location>
        <begin position="40"/>
        <end position="51"/>
    </location>
</feature>
<feature type="transmembrane region" description="Helical" evidence="1">
    <location>
        <begin position="52"/>
        <end position="71"/>
    </location>
</feature>
<feature type="topological domain" description="Cytoplasmic" evidence="1">
    <location>
        <begin position="72"/>
        <end position="95"/>
    </location>
</feature>
<feature type="transmembrane region" description="Helical" evidence="1">
    <location>
        <begin position="96"/>
        <end position="118"/>
    </location>
</feature>
<feature type="topological domain" description="Periplasmic" evidence="1">
    <location>
        <begin position="119"/>
        <end position="125"/>
    </location>
</feature>
<feature type="transmembrane region" description="Helical" evidence="1">
    <location>
        <begin position="126"/>
        <end position="145"/>
    </location>
</feature>
<feature type="topological domain" description="Cytoplasmic" evidence="1">
    <location>
        <begin position="146"/>
        <end position="155"/>
    </location>
</feature>
<feature type="transmembrane region" description="Helical" evidence="1">
    <location>
        <begin position="156"/>
        <end position="175"/>
    </location>
</feature>
<feature type="topological domain" description="Periplasmic" evidence="1">
    <location>
        <begin position="176"/>
        <end position="196"/>
    </location>
</feature>
<feature type="transmembrane region" description="Helical" evidence="1">
    <location>
        <begin position="197"/>
        <end position="220"/>
    </location>
</feature>
<feature type="topological domain" description="Cytoplasmic" evidence="1">
    <location>
        <begin position="221"/>
        <end position="238"/>
    </location>
</feature>
<feature type="transmembrane region" description="Helical" evidence="1">
    <location>
        <begin position="239"/>
        <end position="258"/>
    </location>
</feature>
<feature type="topological domain" description="Periplasmic" evidence="1">
    <location>
        <begin position="259"/>
        <end position="276"/>
    </location>
</feature>
<feature type="transmembrane region" description="Helical" evidence="1">
    <location>
        <begin position="277"/>
        <end position="297"/>
    </location>
</feature>
<feature type="topological domain" description="Cytoplasmic" evidence="1">
    <location>
        <begin position="298"/>
        <end position="327"/>
    </location>
</feature>
<feature type="transmembrane region" description="Helical" evidence="1">
    <location>
        <begin position="328"/>
        <end position="344"/>
    </location>
</feature>
<feature type="topological domain" description="Periplasmic" evidence="1">
    <location>
        <begin position="345"/>
        <end position="350"/>
    </location>
</feature>
<feature type="transmembrane region" description="Helical" evidence="1">
    <location>
        <begin position="351"/>
        <end position="370"/>
    </location>
</feature>
<feature type="topological domain" description="Cytoplasmic" evidence="1">
    <location>
        <begin position="371"/>
        <end position="387"/>
    </location>
</feature>
<feature type="transmembrane region" description="Helical" evidence="1">
    <location>
        <begin position="388"/>
        <end position="406"/>
    </location>
</feature>
<feature type="topological domain" description="Periplasmic" evidence="1">
    <location>
        <begin position="407"/>
        <end position="412"/>
    </location>
</feature>
<accession>A7ZPK2</accession>
<keyword id="KW-0997">Cell inner membrane</keyword>
<keyword id="KW-1003">Cell membrane</keyword>
<keyword id="KW-0406">Ion transport</keyword>
<keyword id="KW-0472">Membrane</keyword>
<keyword id="KW-1185">Reference proteome</keyword>
<keyword id="KW-0769">Symport</keyword>
<keyword id="KW-0812">Transmembrane</keyword>
<keyword id="KW-1133">Transmembrane helix</keyword>
<keyword id="KW-0813">Transport</keyword>
<organism>
    <name type="scientific">Escherichia coli O139:H28 (strain E24377A / ETEC)</name>
    <dbReference type="NCBI Taxonomy" id="331111"/>
    <lineage>
        <taxon>Bacteria</taxon>
        <taxon>Pseudomonadati</taxon>
        <taxon>Pseudomonadota</taxon>
        <taxon>Gammaproteobacteria</taxon>
        <taxon>Enterobacterales</taxon>
        <taxon>Enterobacteriaceae</taxon>
        <taxon>Escherichia</taxon>
    </lineage>
</organism>
<sequence length="412" mass="44194">MTNYRVESSSGRAARKMRLALMGPAFIAAIGYIDPGNFATNIQAGASFGYQLLWVVVWANLMAMLIQILSAKLGIATGKNLAEQIRDHYPRPVVWFYWVQAEIIAMATDLAEFIGAAIGFKLILGVSLLQGAVLTGIATFLILMLQRRGQKPLEKVIGGLLLFVAAAYIVELIFSQPNLAQLGKGMVIPSLPTSEAVFLAAGVLGATIMPHVIYLHSSLTQHLHGGSRQQRYSATKWDVAIAMTIAGFVNLAMMATAAAAFHFSGHTGVADLDEAYLTLQPLLSHAAATVFGLSLVAAGLSSTVVGTLAGQVVMQGFIRFHIPLWVRRTVTMLPSFIVILMGLDPTRILVMSQVLLSFGIALALVPLLIFTSDSKLMGDLVNSKRVKQTGWVIVVLVVALNIWLLVGTALGL</sequence>